<keyword id="KW-0067">ATP-binding</keyword>
<keyword id="KW-0963">Cytoplasm</keyword>
<keyword id="KW-0227">DNA damage</keyword>
<keyword id="KW-0233">DNA recombination</keyword>
<keyword id="KW-0234">DNA repair</keyword>
<keyword id="KW-0238">DNA-binding</keyword>
<keyword id="KW-0378">Hydrolase</keyword>
<keyword id="KW-0547">Nucleotide-binding</keyword>
<gene>
    <name evidence="1" type="primary">ruvB</name>
    <name type="ordered locus">gbs0049</name>
</gene>
<sequence length="332" mass="37574">MTRFLDSDAMGDEELVERTLRPQYLREYIGQDKVKDQLKIFIEAAKLRDESLDHVLLFGPPGLGKTTMAFVIANELGVNLKQTSGPAIEKSGDLVAILNDLEPGDVLFIDEIHRMPMAVEEVLYSAMEDFYIDIMIGAGETSRSVHLDLPPFTLIGATTRAGMLSNPLRARFGITGHMEYYEENDLTEIIERTADIFEMKITYEAASELARRSRGTPRIANRLLKRVRDYAQIMGDGLIDDNITDKALTMLDVDHEGLDYVDQKILRTMIEMYNGGPVGLGTLSVNIAEERDTVEDMYEPYLIQKGFIMRTRTGRVATDKAYEHLGYQRFDK</sequence>
<proteinExistence type="inferred from homology"/>
<dbReference type="EC" id="3.6.4.-" evidence="1"/>
<dbReference type="EMBL" id="AL766843">
    <property type="protein sequence ID" value="CAD45694.1"/>
    <property type="molecule type" value="Genomic_DNA"/>
</dbReference>
<dbReference type="RefSeq" id="WP_000196633.1">
    <property type="nucleotide sequence ID" value="NC_004368.1"/>
</dbReference>
<dbReference type="SMR" id="Q8E7U6"/>
<dbReference type="KEGG" id="san:ruvB"/>
<dbReference type="eggNOG" id="COG2255">
    <property type="taxonomic scope" value="Bacteria"/>
</dbReference>
<dbReference type="HOGENOM" id="CLU_055599_1_0_9"/>
<dbReference type="Proteomes" id="UP000000823">
    <property type="component" value="Chromosome"/>
</dbReference>
<dbReference type="GO" id="GO:0005737">
    <property type="term" value="C:cytoplasm"/>
    <property type="evidence" value="ECO:0007669"/>
    <property type="project" value="UniProtKB-SubCell"/>
</dbReference>
<dbReference type="GO" id="GO:0048476">
    <property type="term" value="C:Holliday junction resolvase complex"/>
    <property type="evidence" value="ECO:0007669"/>
    <property type="project" value="UniProtKB-UniRule"/>
</dbReference>
<dbReference type="GO" id="GO:0005524">
    <property type="term" value="F:ATP binding"/>
    <property type="evidence" value="ECO:0007669"/>
    <property type="project" value="UniProtKB-UniRule"/>
</dbReference>
<dbReference type="GO" id="GO:0016887">
    <property type="term" value="F:ATP hydrolysis activity"/>
    <property type="evidence" value="ECO:0007669"/>
    <property type="project" value="InterPro"/>
</dbReference>
<dbReference type="GO" id="GO:0000400">
    <property type="term" value="F:four-way junction DNA binding"/>
    <property type="evidence" value="ECO:0007669"/>
    <property type="project" value="UniProtKB-UniRule"/>
</dbReference>
<dbReference type="GO" id="GO:0009378">
    <property type="term" value="F:four-way junction helicase activity"/>
    <property type="evidence" value="ECO:0007669"/>
    <property type="project" value="InterPro"/>
</dbReference>
<dbReference type="GO" id="GO:0006310">
    <property type="term" value="P:DNA recombination"/>
    <property type="evidence" value="ECO:0007669"/>
    <property type="project" value="UniProtKB-UniRule"/>
</dbReference>
<dbReference type="GO" id="GO:0006281">
    <property type="term" value="P:DNA repair"/>
    <property type="evidence" value="ECO:0007669"/>
    <property type="project" value="UniProtKB-UniRule"/>
</dbReference>
<dbReference type="CDD" id="cd00009">
    <property type="entry name" value="AAA"/>
    <property type="match status" value="1"/>
</dbReference>
<dbReference type="Gene3D" id="1.10.8.60">
    <property type="match status" value="1"/>
</dbReference>
<dbReference type="Gene3D" id="3.40.50.300">
    <property type="entry name" value="P-loop containing nucleotide triphosphate hydrolases"/>
    <property type="match status" value="1"/>
</dbReference>
<dbReference type="Gene3D" id="1.10.10.10">
    <property type="entry name" value="Winged helix-like DNA-binding domain superfamily/Winged helix DNA-binding domain"/>
    <property type="match status" value="1"/>
</dbReference>
<dbReference type="HAMAP" id="MF_00016">
    <property type="entry name" value="DNA_HJ_migration_RuvB"/>
    <property type="match status" value="1"/>
</dbReference>
<dbReference type="InterPro" id="IPR003593">
    <property type="entry name" value="AAA+_ATPase"/>
</dbReference>
<dbReference type="InterPro" id="IPR041445">
    <property type="entry name" value="AAA_lid_4"/>
</dbReference>
<dbReference type="InterPro" id="IPR004605">
    <property type="entry name" value="DNA_helicase_Holl-junc_RuvB"/>
</dbReference>
<dbReference type="InterPro" id="IPR027417">
    <property type="entry name" value="P-loop_NTPase"/>
</dbReference>
<dbReference type="InterPro" id="IPR008824">
    <property type="entry name" value="RuvB-like_N"/>
</dbReference>
<dbReference type="InterPro" id="IPR008823">
    <property type="entry name" value="RuvB_C"/>
</dbReference>
<dbReference type="InterPro" id="IPR036388">
    <property type="entry name" value="WH-like_DNA-bd_sf"/>
</dbReference>
<dbReference type="InterPro" id="IPR036390">
    <property type="entry name" value="WH_DNA-bd_sf"/>
</dbReference>
<dbReference type="NCBIfam" id="NF000868">
    <property type="entry name" value="PRK00080.1"/>
    <property type="match status" value="1"/>
</dbReference>
<dbReference type="NCBIfam" id="TIGR00635">
    <property type="entry name" value="ruvB"/>
    <property type="match status" value="1"/>
</dbReference>
<dbReference type="PANTHER" id="PTHR42848">
    <property type="match status" value="1"/>
</dbReference>
<dbReference type="PANTHER" id="PTHR42848:SF1">
    <property type="entry name" value="HOLLIDAY JUNCTION BRANCH MIGRATION COMPLEX SUBUNIT RUVB"/>
    <property type="match status" value="1"/>
</dbReference>
<dbReference type="Pfam" id="PF17864">
    <property type="entry name" value="AAA_lid_4"/>
    <property type="match status" value="1"/>
</dbReference>
<dbReference type="Pfam" id="PF05491">
    <property type="entry name" value="RuvB_C"/>
    <property type="match status" value="1"/>
</dbReference>
<dbReference type="Pfam" id="PF05496">
    <property type="entry name" value="RuvB_N"/>
    <property type="match status" value="1"/>
</dbReference>
<dbReference type="SMART" id="SM00382">
    <property type="entry name" value="AAA"/>
    <property type="match status" value="1"/>
</dbReference>
<dbReference type="SUPFAM" id="SSF52540">
    <property type="entry name" value="P-loop containing nucleoside triphosphate hydrolases"/>
    <property type="match status" value="1"/>
</dbReference>
<dbReference type="SUPFAM" id="SSF46785">
    <property type="entry name" value="Winged helix' DNA-binding domain"/>
    <property type="match status" value="1"/>
</dbReference>
<evidence type="ECO:0000255" key="1">
    <source>
        <dbReference type="HAMAP-Rule" id="MF_00016"/>
    </source>
</evidence>
<organism>
    <name type="scientific">Streptococcus agalactiae serotype III (strain NEM316)</name>
    <dbReference type="NCBI Taxonomy" id="211110"/>
    <lineage>
        <taxon>Bacteria</taxon>
        <taxon>Bacillati</taxon>
        <taxon>Bacillota</taxon>
        <taxon>Bacilli</taxon>
        <taxon>Lactobacillales</taxon>
        <taxon>Streptococcaceae</taxon>
        <taxon>Streptococcus</taxon>
    </lineage>
</organism>
<accession>Q8E7U6</accession>
<reference key="1">
    <citation type="journal article" date="2002" name="Mol. Microbiol.">
        <title>Genome sequence of Streptococcus agalactiae, a pathogen causing invasive neonatal disease.</title>
        <authorList>
            <person name="Glaser P."/>
            <person name="Rusniok C."/>
            <person name="Buchrieser C."/>
            <person name="Chevalier F."/>
            <person name="Frangeul L."/>
            <person name="Msadek T."/>
            <person name="Zouine M."/>
            <person name="Couve E."/>
            <person name="Lalioui L."/>
            <person name="Poyart C."/>
            <person name="Trieu-Cuot P."/>
            <person name="Kunst F."/>
        </authorList>
    </citation>
    <scope>NUCLEOTIDE SEQUENCE [LARGE SCALE GENOMIC DNA]</scope>
    <source>
        <strain>NEM316</strain>
    </source>
</reference>
<name>RUVB_STRA3</name>
<feature type="chain" id="PRO_0000165602" description="Holliday junction branch migration complex subunit RuvB">
    <location>
        <begin position="1"/>
        <end position="332"/>
    </location>
</feature>
<feature type="region of interest" description="Large ATPase domain (RuvB-L)" evidence="1">
    <location>
        <begin position="1"/>
        <end position="181"/>
    </location>
</feature>
<feature type="region of interest" description="Small ATPAse domain (RuvB-S)" evidence="1">
    <location>
        <begin position="182"/>
        <end position="252"/>
    </location>
</feature>
<feature type="region of interest" description="Head domain (RuvB-H)" evidence="1">
    <location>
        <begin position="255"/>
        <end position="332"/>
    </location>
</feature>
<feature type="binding site" evidence="1">
    <location>
        <position position="20"/>
    </location>
    <ligand>
        <name>ATP</name>
        <dbReference type="ChEBI" id="CHEBI:30616"/>
    </ligand>
</feature>
<feature type="binding site" evidence="1">
    <location>
        <position position="21"/>
    </location>
    <ligand>
        <name>ATP</name>
        <dbReference type="ChEBI" id="CHEBI:30616"/>
    </ligand>
</feature>
<feature type="binding site" evidence="1">
    <location>
        <position position="62"/>
    </location>
    <ligand>
        <name>ATP</name>
        <dbReference type="ChEBI" id="CHEBI:30616"/>
    </ligand>
</feature>
<feature type="binding site" evidence="1">
    <location>
        <position position="65"/>
    </location>
    <ligand>
        <name>ATP</name>
        <dbReference type="ChEBI" id="CHEBI:30616"/>
    </ligand>
</feature>
<feature type="binding site" evidence="1">
    <location>
        <position position="66"/>
    </location>
    <ligand>
        <name>ATP</name>
        <dbReference type="ChEBI" id="CHEBI:30616"/>
    </ligand>
</feature>
<feature type="binding site" evidence="1">
    <location>
        <position position="66"/>
    </location>
    <ligand>
        <name>Mg(2+)</name>
        <dbReference type="ChEBI" id="CHEBI:18420"/>
    </ligand>
</feature>
<feature type="binding site" evidence="1">
    <location>
        <position position="67"/>
    </location>
    <ligand>
        <name>ATP</name>
        <dbReference type="ChEBI" id="CHEBI:30616"/>
    </ligand>
</feature>
<feature type="binding site" evidence="1">
    <location>
        <begin position="128"/>
        <end position="130"/>
    </location>
    <ligand>
        <name>ATP</name>
        <dbReference type="ChEBI" id="CHEBI:30616"/>
    </ligand>
</feature>
<feature type="binding site" evidence="1">
    <location>
        <position position="171"/>
    </location>
    <ligand>
        <name>ATP</name>
        <dbReference type="ChEBI" id="CHEBI:30616"/>
    </ligand>
</feature>
<feature type="binding site" evidence="1">
    <location>
        <position position="181"/>
    </location>
    <ligand>
        <name>ATP</name>
        <dbReference type="ChEBI" id="CHEBI:30616"/>
    </ligand>
</feature>
<feature type="binding site" evidence="1">
    <location>
        <position position="218"/>
    </location>
    <ligand>
        <name>ATP</name>
        <dbReference type="ChEBI" id="CHEBI:30616"/>
    </ligand>
</feature>
<feature type="binding site" evidence="1">
    <location>
        <position position="291"/>
    </location>
    <ligand>
        <name>DNA</name>
        <dbReference type="ChEBI" id="CHEBI:16991"/>
    </ligand>
</feature>
<feature type="binding site" evidence="1">
    <location>
        <position position="310"/>
    </location>
    <ligand>
        <name>DNA</name>
        <dbReference type="ChEBI" id="CHEBI:16991"/>
    </ligand>
</feature>
<feature type="binding site" evidence="1">
    <location>
        <position position="312"/>
    </location>
    <ligand>
        <name>DNA</name>
        <dbReference type="ChEBI" id="CHEBI:16991"/>
    </ligand>
</feature>
<feature type="binding site" evidence="1">
    <location>
        <position position="315"/>
    </location>
    <ligand>
        <name>DNA</name>
        <dbReference type="ChEBI" id="CHEBI:16991"/>
    </ligand>
</feature>
<comment type="function">
    <text evidence="1">The RuvA-RuvB-RuvC complex processes Holliday junction (HJ) DNA during genetic recombination and DNA repair, while the RuvA-RuvB complex plays an important role in the rescue of blocked DNA replication forks via replication fork reversal (RFR). RuvA specifically binds to HJ cruciform DNA, conferring on it an open structure. The RuvB hexamer acts as an ATP-dependent pump, pulling dsDNA into and through the RuvAB complex. RuvB forms 2 homohexamers on either side of HJ DNA bound by 1 or 2 RuvA tetramers; 4 subunits per hexamer contact DNA at a time. Coordinated motions by a converter formed by DNA-disengaged RuvB subunits stimulates ATP hydrolysis and nucleotide exchange. Immobilization of the converter enables RuvB to convert the ATP-contained energy into a lever motion, pulling 2 nucleotides of DNA out of the RuvA tetramer per ATP hydrolyzed, thus driving DNA branch migration. The RuvB motors rotate together with the DNA substrate, which together with the progressing nucleotide cycle form the mechanistic basis for DNA recombination by continuous HJ branch migration. Branch migration allows RuvC to scan DNA until it finds its consensus sequence, where it cleaves and resolves cruciform DNA.</text>
</comment>
<comment type="catalytic activity">
    <reaction evidence="1">
        <text>ATP + H2O = ADP + phosphate + H(+)</text>
        <dbReference type="Rhea" id="RHEA:13065"/>
        <dbReference type="ChEBI" id="CHEBI:15377"/>
        <dbReference type="ChEBI" id="CHEBI:15378"/>
        <dbReference type="ChEBI" id="CHEBI:30616"/>
        <dbReference type="ChEBI" id="CHEBI:43474"/>
        <dbReference type="ChEBI" id="CHEBI:456216"/>
    </reaction>
</comment>
<comment type="subunit">
    <text evidence="1">Homohexamer. Forms an RuvA(8)-RuvB(12)-Holliday junction (HJ) complex. HJ DNA is sandwiched between 2 RuvA tetramers; dsDNA enters through RuvA and exits via RuvB. An RuvB hexamer assembles on each DNA strand where it exits the tetramer. Each RuvB hexamer is contacted by two RuvA subunits (via domain III) on 2 adjacent RuvB subunits; this complex drives branch migration. In the full resolvosome a probable DNA-RuvA(4)-RuvB(12)-RuvC(2) complex forms which resolves the HJ.</text>
</comment>
<comment type="subcellular location">
    <subcellularLocation>
        <location evidence="1">Cytoplasm</location>
    </subcellularLocation>
</comment>
<comment type="domain">
    <text evidence="1">Has 3 domains, the large (RuvB-L) and small ATPase (RuvB-S) domains and the C-terminal head (RuvB-H) domain. The head domain binds DNA, while the ATPase domains jointly bind ATP, ADP or are empty depending on the state of the subunit in the translocation cycle. During a single DNA translocation step the structure of each domain remains the same, but their relative positions change.</text>
</comment>
<comment type="similarity">
    <text evidence="1">Belongs to the RuvB family.</text>
</comment>
<protein>
    <recommendedName>
        <fullName evidence="1">Holliday junction branch migration complex subunit RuvB</fullName>
        <ecNumber evidence="1">3.6.4.-</ecNumber>
    </recommendedName>
</protein>